<accession>B5EZI1</accession>
<evidence type="ECO:0000255" key="1">
    <source>
        <dbReference type="HAMAP-Rule" id="MF_01869"/>
    </source>
</evidence>
<feature type="chain" id="PRO_0000382990" description="Probable 4-amino-4-deoxy-L-arabinose-phosphoundecaprenol flippase subunit ArnE">
    <location>
        <begin position="1"/>
        <end position="111"/>
    </location>
</feature>
<feature type="transmembrane region" description="Helical" evidence="1">
    <location>
        <begin position="38"/>
        <end position="58"/>
    </location>
</feature>
<feature type="transmembrane region" description="Helical" evidence="1">
    <location>
        <begin position="61"/>
        <end position="81"/>
    </location>
</feature>
<feature type="transmembrane region" description="Helical" evidence="1">
    <location>
        <begin position="91"/>
        <end position="111"/>
    </location>
</feature>
<feature type="domain" description="EamA" evidence="1">
    <location>
        <begin position="40"/>
        <end position="109"/>
    </location>
</feature>
<organism>
    <name type="scientific">Salmonella agona (strain SL483)</name>
    <dbReference type="NCBI Taxonomy" id="454166"/>
    <lineage>
        <taxon>Bacteria</taxon>
        <taxon>Pseudomonadati</taxon>
        <taxon>Pseudomonadota</taxon>
        <taxon>Gammaproteobacteria</taxon>
        <taxon>Enterobacterales</taxon>
        <taxon>Enterobacteriaceae</taxon>
        <taxon>Salmonella</taxon>
    </lineage>
</organism>
<dbReference type="EMBL" id="CP001138">
    <property type="protein sequence ID" value="ACH50067.1"/>
    <property type="molecule type" value="Genomic_DNA"/>
</dbReference>
<dbReference type="RefSeq" id="WP_000580685.1">
    <property type="nucleotide sequence ID" value="NC_011149.1"/>
</dbReference>
<dbReference type="SMR" id="B5EZI1"/>
<dbReference type="KEGG" id="sea:SeAg_B2438"/>
<dbReference type="HOGENOM" id="CLU_131462_5_1_6"/>
<dbReference type="UniPathway" id="UPA00030"/>
<dbReference type="Proteomes" id="UP000008819">
    <property type="component" value="Chromosome"/>
</dbReference>
<dbReference type="GO" id="GO:0005886">
    <property type="term" value="C:plasma membrane"/>
    <property type="evidence" value="ECO:0007669"/>
    <property type="project" value="UniProtKB-SubCell"/>
</dbReference>
<dbReference type="GO" id="GO:1901505">
    <property type="term" value="F:carbohydrate derivative transmembrane transporter activity"/>
    <property type="evidence" value="ECO:0007669"/>
    <property type="project" value="InterPro"/>
</dbReference>
<dbReference type="GO" id="GO:0009245">
    <property type="term" value="P:lipid A biosynthetic process"/>
    <property type="evidence" value="ECO:0007669"/>
    <property type="project" value="UniProtKB-UniRule"/>
</dbReference>
<dbReference type="GO" id="GO:0009103">
    <property type="term" value="P:lipopolysaccharide biosynthetic process"/>
    <property type="evidence" value="ECO:0007669"/>
    <property type="project" value="UniProtKB-UniRule"/>
</dbReference>
<dbReference type="FunFam" id="1.10.3730.20:FF:000002">
    <property type="entry name" value="Probable 4-amino-4-deoxy-L-arabinose-phosphoundecaprenol flippase subunit ArnE"/>
    <property type="match status" value="1"/>
</dbReference>
<dbReference type="Gene3D" id="1.10.3730.20">
    <property type="match status" value="1"/>
</dbReference>
<dbReference type="HAMAP" id="MF_01869">
    <property type="entry name" value="Flippase_ArnE"/>
    <property type="match status" value="1"/>
</dbReference>
<dbReference type="InterPro" id="IPR000620">
    <property type="entry name" value="EamA_dom"/>
</dbReference>
<dbReference type="InterPro" id="IPR022883">
    <property type="entry name" value="Flippase_ArnE"/>
</dbReference>
<dbReference type="InterPro" id="IPR000390">
    <property type="entry name" value="Small_drug/metabolite_transptr"/>
</dbReference>
<dbReference type="NCBIfam" id="NF011625">
    <property type="entry name" value="PRK15051.1"/>
    <property type="match status" value="1"/>
</dbReference>
<dbReference type="PANTHER" id="PTHR30561:SF23">
    <property type="entry name" value="4-AMINO-4-DEOXY-L-ARABINOSE-PHOSPHOUNDECAPRENOL FLIPPASE SUBUNIT ARNE-RELATED"/>
    <property type="match status" value="1"/>
</dbReference>
<dbReference type="PANTHER" id="PTHR30561">
    <property type="entry name" value="SMR FAMILY PROTON-DEPENDENT DRUG EFFLUX TRANSPORTER SUGE"/>
    <property type="match status" value="1"/>
</dbReference>
<dbReference type="Pfam" id="PF00892">
    <property type="entry name" value="EamA"/>
    <property type="match status" value="1"/>
</dbReference>
<dbReference type="SUPFAM" id="SSF103481">
    <property type="entry name" value="Multidrug resistance efflux transporter EmrE"/>
    <property type="match status" value="1"/>
</dbReference>
<proteinExistence type="inferred from homology"/>
<protein>
    <recommendedName>
        <fullName evidence="1">Probable 4-amino-4-deoxy-L-arabinose-phosphoundecaprenol flippase subunit ArnE</fullName>
        <shortName evidence="1">L-Ara4N-phosphoundecaprenol flippase subunit ArnE</shortName>
    </recommendedName>
    <alternativeName>
        <fullName evidence="1">Undecaprenyl phosphate-aminoarabinose flippase subunit ArnE</fullName>
    </alternativeName>
</protein>
<reference key="1">
    <citation type="journal article" date="2011" name="J. Bacteriol.">
        <title>Comparative genomics of 28 Salmonella enterica isolates: evidence for CRISPR-mediated adaptive sublineage evolution.</title>
        <authorList>
            <person name="Fricke W.F."/>
            <person name="Mammel M.K."/>
            <person name="McDermott P.F."/>
            <person name="Tartera C."/>
            <person name="White D.G."/>
            <person name="Leclerc J.E."/>
            <person name="Ravel J."/>
            <person name="Cebula T.A."/>
        </authorList>
    </citation>
    <scope>NUCLEOTIDE SEQUENCE [LARGE SCALE GENOMIC DNA]</scope>
    <source>
        <strain>SL483</strain>
    </source>
</reference>
<keyword id="KW-0997">Cell inner membrane</keyword>
<keyword id="KW-1003">Cell membrane</keyword>
<keyword id="KW-0441">Lipid A biosynthesis</keyword>
<keyword id="KW-0444">Lipid biosynthesis</keyword>
<keyword id="KW-0443">Lipid metabolism</keyword>
<keyword id="KW-0448">Lipopolysaccharide biosynthesis</keyword>
<keyword id="KW-0472">Membrane</keyword>
<keyword id="KW-0812">Transmembrane</keyword>
<keyword id="KW-1133">Transmembrane helix</keyword>
<keyword id="KW-0813">Transport</keyword>
<sequence>MIGVVLVLASLLSVGGQLCQKQATRPLTAGGRRRHLMLWLGLALICMGAAMVLWLLVLQTLPVGIAYPMLSLNFVWVTLAAWKIWHEQVPPRHWLGVALIISGIIILGSAA</sequence>
<name>ARNE_SALA4</name>
<gene>
    <name evidence="1" type="primary">arnE</name>
    <name type="ordered locus">SeAg_B2438</name>
</gene>
<comment type="function">
    <text evidence="1">Translocates 4-amino-4-deoxy-L-arabinose-phosphoundecaprenol (alpha-L-Ara4N-phosphoundecaprenol) from the cytoplasmic to the periplasmic side of the inner membrane.</text>
</comment>
<comment type="pathway">
    <text evidence="1">Bacterial outer membrane biogenesis; lipopolysaccharide biosynthesis.</text>
</comment>
<comment type="subunit">
    <text evidence="1">Heterodimer of ArnE and ArnF.</text>
</comment>
<comment type="subcellular location">
    <subcellularLocation>
        <location evidence="1">Cell inner membrane</location>
        <topology evidence="1">Multi-pass membrane protein</topology>
    </subcellularLocation>
</comment>
<comment type="similarity">
    <text evidence="1">Belongs to the ArnE family.</text>
</comment>